<accession>P82085</accession>
<feature type="peptide" id="PRO_0000043790" description="Dynastin-7">
    <location>
        <begin position="1"/>
        <end position="12"/>
    </location>
</feature>
<name>DYS7_LIMSA</name>
<keyword id="KW-0903">Direct protein sequencing</keyword>
<keyword id="KW-0964">Secreted</keyword>
<comment type="subcellular location">
    <subcellularLocation>
        <location>Secreted</location>
    </subcellularLocation>
</comment>
<comment type="tissue specificity">
    <text>Expressed by the skin glands.</text>
</comment>
<comment type="mass spectrometry"/>
<dbReference type="GO" id="GO:0005576">
    <property type="term" value="C:extracellular region"/>
    <property type="evidence" value="ECO:0007669"/>
    <property type="project" value="UniProtKB-SubCell"/>
</dbReference>
<protein>
    <recommendedName>
        <fullName>Dynastin-7</fullName>
    </recommendedName>
</protein>
<evidence type="ECO:0000269" key="1">
    <source ref="1"/>
</evidence>
<proteinExistence type="evidence at protein level"/>
<reference key="1">
    <citation type="journal article" date="1993" name="Aust. J. Chem.">
        <title>Peptides from Australian frogs. The structure of the dynastins from Limnodynastes salmini and fletcherin from Limnodynastes fletcheri.</title>
        <authorList>
            <person name="Bradford A.M."/>
            <person name="Raftery M.J."/>
            <person name="Bowie J.H."/>
            <person name="Wallace J.C."/>
            <person name="Tyler M.J."/>
        </authorList>
    </citation>
    <scope>PROTEIN SEQUENCE</scope>
    <scope>MASS SPECTROMETRY</scope>
    <source>
        <tissue>Skin secretion</tissue>
    </source>
</reference>
<sequence>GAVSGLLTNLGL</sequence>
<organism>
    <name type="scientific">Limnodynastes salmini</name>
    <name type="common">Salmon-striped frog</name>
    <dbReference type="NCBI Taxonomy" id="39404"/>
    <lineage>
        <taxon>Eukaryota</taxon>
        <taxon>Metazoa</taxon>
        <taxon>Chordata</taxon>
        <taxon>Craniata</taxon>
        <taxon>Vertebrata</taxon>
        <taxon>Euteleostomi</taxon>
        <taxon>Amphibia</taxon>
        <taxon>Batrachia</taxon>
        <taxon>Anura</taxon>
        <taxon>Neobatrachia</taxon>
        <taxon>Myobatrachoidea</taxon>
        <taxon>Limnodynastidae</taxon>
        <taxon>Limnodynastes</taxon>
    </lineage>
</organism>